<keyword id="KW-0244">Early protein</keyword>
<keyword id="KW-1035">Host cytoplasm</keyword>
<keyword id="KW-1048">Host nucleus</keyword>
<keyword id="KW-1185">Reference proteome</keyword>
<evidence type="ECO:0000250" key="1">
    <source>
        <dbReference type="UniProtKB" id="P03239"/>
    </source>
</evidence>
<evidence type="ECO:0000305" key="2"/>
<name>E434_ADE40</name>
<protein>
    <recommendedName>
        <fullName>Early E4 34 kDa protein</fullName>
    </recommendedName>
</protein>
<dbReference type="EMBL" id="L19443">
    <property type="protein sequence ID" value="AAC13981.2"/>
    <property type="molecule type" value="Genomic_DNA"/>
</dbReference>
<dbReference type="RefSeq" id="NP_040878.2">
    <property type="nucleotide sequence ID" value="NC_001454.1"/>
</dbReference>
<dbReference type="DNASU" id="2715935"/>
<dbReference type="GeneID" id="2715935"/>
<dbReference type="KEGG" id="vg:2715935"/>
<dbReference type="Proteomes" id="UP000151954">
    <property type="component" value="Segment"/>
</dbReference>
<dbReference type="GO" id="GO:0030430">
    <property type="term" value="C:host cell cytoplasm"/>
    <property type="evidence" value="ECO:0007669"/>
    <property type="project" value="UniProtKB-SubCell"/>
</dbReference>
<dbReference type="GO" id="GO:0042025">
    <property type="term" value="C:host cell nucleus"/>
    <property type="evidence" value="ECO:0007669"/>
    <property type="project" value="UniProtKB-SubCell"/>
</dbReference>
<dbReference type="InterPro" id="IPR007615">
    <property type="entry name" value="Adenovirus_E4_30/34"/>
</dbReference>
<dbReference type="Pfam" id="PF04528">
    <property type="entry name" value="Adeno_E4_34"/>
    <property type="match status" value="1"/>
</dbReference>
<feature type="chain" id="PRO_0000221779" description="Early E4 34 kDa protein">
    <location>
        <begin position="1"/>
        <end position="289"/>
    </location>
</feature>
<comment type="function">
    <text evidence="1">Plays a major role to prevent cellular inhibition of viral genome replication by nuclear bodies. Assembles an SCF-like E3 ubiquitin ligase complex based on the cellular proteins ELOB, ELOC, CUL5 and RBX1, in cooperation with viral E1B-55K. This viral RING-type ligase ubiquitinates cellular substrates prior to proteasomal degradation: p53/TP53, LIG4, MRE11-RAD50-NBS1 (MRN) complex, ITGA3, DAXX and BLM.</text>
</comment>
<comment type="subunit">
    <text evidence="1">Interacts with E1B-55k.</text>
</comment>
<comment type="subcellular location">
    <subcellularLocation>
        <location evidence="1">Host nucleus</location>
    </subcellularLocation>
    <subcellularLocation>
        <location evidence="1">Host cytoplasm</location>
    </subcellularLocation>
</comment>
<comment type="similarity">
    <text evidence="2">Belongs to the adenoviridae E4 30 to 34 kDa protein family.</text>
</comment>
<organism>
    <name type="scientific">Human adenovirus F serotype 40</name>
    <name type="common">HAdV-40</name>
    <name type="synonym">Human adenovirus 40</name>
    <dbReference type="NCBI Taxonomy" id="28284"/>
    <lineage>
        <taxon>Viruses</taxon>
        <taxon>Varidnaviria</taxon>
        <taxon>Bamfordvirae</taxon>
        <taxon>Preplasmiviricota</taxon>
        <taxon>Tectiliviricetes</taxon>
        <taxon>Rowavirales</taxon>
        <taxon>Adenoviridae</taxon>
        <taxon>Mastadenovirus</taxon>
        <taxon>Human mastadenovirus F</taxon>
    </lineage>
</organism>
<proteinExistence type="inferred from homology"/>
<organismHost>
    <name type="scientific">Homo sapiens</name>
    <name type="common">Human</name>
    <dbReference type="NCBI Taxonomy" id="9606"/>
</organismHost>
<reference key="1">
    <citation type="journal article" date="1993" name="J. Mol. Biol.">
        <title>The DNA sequence of adenovirus type 40.</title>
        <authorList>
            <person name="Davison A.J."/>
            <person name="Telford E.A."/>
            <person name="Watson M.S."/>
            <person name="McBride K."/>
            <person name="Mautner V."/>
        </authorList>
    </citation>
    <scope>NUCLEOTIDE SEQUENCE [LARGE SCALE GENOMIC DNA]</scope>
    <source>
        <strain>Dugan</strain>
    </source>
</reference>
<reference key="2">
    <citation type="submission" date="2003-08" db="EMBL/GenBank/DDBJ databases">
        <authorList>
            <person name="Davison A.J."/>
        </authorList>
    </citation>
    <scope>SEQUENCE REVISION TO N-TERMINUS</scope>
</reference>
<sequence>MMQRDRWFRCRLSSYQTHRLPPPSEDSVPIATMERTPGLLECEHLNMHYVSEVRSIPSCAPFVVLQEWPMWWDMILSKWEKHVCKIYMRVCVCCATINVDFNQIVRGFERWTIHCHCIKPGSLQCKAGGVVLANWFKMMIYGSLYNLRFPWYREIVNCGMPKEVLFMGSVFVRGRHFIYIRLLYDGHAAIVLERMSFGWSFFSYGIMNNMVVLGCTYCKNLDELSVRCCARRTRRLLAKAVKVLGSFTVRSLMRSLVEPRRQGLLRGLMERYCPFTLADYNRGENPWRA</sequence>
<accession>Q64865</accession>